<comment type="interaction">
    <interactant intactId="EBI-34720">
        <id>Q08687</id>
    </interactant>
    <interactant intactId="EBI-6289">
        <id>P36049</id>
        <label>EBP2</label>
    </interactant>
    <organismsDiffer>false</organismsDiffer>
    <experiments>3</experiments>
</comment>
<comment type="interaction">
    <interactant intactId="EBI-34720">
        <id>Q08687</id>
    </interactant>
    <interactant intactId="EBI-12122">
        <id>P37838</id>
        <label>NOP4</label>
    </interactant>
    <organismsDiffer>false</organismsDiffer>
    <experiments>3</experiments>
</comment>
<comment type="subcellular location">
    <subcellularLocation>
        <location evidence="1">Nucleus</location>
    </subcellularLocation>
</comment>
<comment type="miscellaneous">
    <text evidence="2">Present with 5350 molecules/cell in log phase SD medium.</text>
</comment>
<comment type="similarity">
    <text evidence="3">Belongs to the TMA16 family.</text>
</comment>
<comment type="sequence caution" evidence="3">
    <conflict type="frameshift">
        <sequence resource="EMBL-CDS" id="CAA99474"/>
    </conflict>
</comment>
<sequence>MPVTKSLSKLQKNLSKKGKNITVHPKGRKYEKLVRATMREDKIAAKKKLHQDKRVHELARVKFMQDVVNSDTFKGQPIFDHAHTREFIQSFIERDDTELDELKKKRRSNRPPSNRQVLLQQRRDQELKEFKAGFLCPDLSDAKNMEFLRNWNGTFGLLNTLRLIRINDKGEQVVGGNE</sequence>
<gene>
    <name type="primary">TMA16</name>
    <name type="ordered locus">YOR252W</name>
</gene>
<evidence type="ECO:0000269" key="1">
    <source>
    </source>
</evidence>
<evidence type="ECO:0000269" key="2">
    <source>
    </source>
</evidence>
<evidence type="ECO:0000305" key="3"/>
<evidence type="ECO:0007829" key="4">
    <source>
        <dbReference type="PDB" id="2KKM"/>
    </source>
</evidence>
<protein>
    <recommendedName>
        <fullName>Translation machinery-associated protein 16</fullName>
    </recommendedName>
</protein>
<accession>Q08687</accession>
<accession>D6W2V3</accession>
<organism>
    <name type="scientific">Saccharomyces cerevisiae (strain ATCC 204508 / S288c)</name>
    <name type="common">Baker's yeast</name>
    <dbReference type="NCBI Taxonomy" id="559292"/>
    <lineage>
        <taxon>Eukaryota</taxon>
        <taxon>Fungi</taxon>
        <taxon>Dikarya</taxon>
        <taxon>Ascomycota</taxon>
        <taxon>Saccharomycotina</taxon>
        <taxon>Saccharomycetes</taxon>
        <taxon>Saccharomycetales</taxon>
        <taxon>Saccharomycetaceae</taxon>
        <taxon>Saccharomyces</taxon>
    </lineage>
</organism>
<feature type="chain" id="PRO_0000237637" description="Translation machinery-associated protein 16">
    <location>
        <begin position="1"/>
        <end position="178"/>
    </location>
</feature>
<feature type="helix" evidence="4">
    <location>
        <begin position="55"/>
        <end position="69"/>
    </location>
</feature>
<feature type="turn" evidence="4">
    <location>
        <begin position="71"/>
        <end position="75"/>
    </location>
</feature>
<feature type="helix" evidence="4">
    <location>
        <begin position="81"/>
        <end position="105"/>
    </location>
</feature>
<feature type="helix" evidence="4">
    <location>
        <begin position="106"/>
        <end position="108"/>
    </location>
</feature>
<feature type="helix" evidence="4">
    <location>
        <begin position="115"/>
        <end position="131"/>
    </location>
</feature>
<feature type="strand" evidence="4">
    <location>
        <begin position="134"/>
        <end position="137"/>
    </location>
</feature>
<feature type="helix" evidence="4">
    <location>
        <begin position="142"/>
        <end position="149"/>
    </location>
</feature>
<feature type="helix" evidence="4">
    <location>
        <begin position="157"/>
        <end position="160"/>
    </location>
</feature>
<feature type="strand" evidence="4">
    <location>
        <begin position="163"/>
        <end position="167"/>
    </location>
</feature>
<feature type="turn" evidence="4">
    <location>
        <begin position="168"/>
        <end position="170"/>
    </location>
</feature>
<dbReference type="EMBL" id="Z75160">
    <property type="protein sequence ID" value="CAA99474.1"/>
    <property type="status" value="ALT_FRAME"/>
    <property type="molecule type" value="Genomic_DNA"/>
</dbReference>
<dbReference type="EMBL" id="BK006948">
    <property type="protein sequence ID" value="DAA11019.1"/>
    <property type="molecule type" value="Genomic_DNA"/>
</dbReference>
<dbReference type="PIR" id="S67149">
    <property type="entry name" value="S67149"/>
</dbReference>
<dbReference type="RefSeq" id="NP_014895.2">
    <property type="nucleotide sequence ID" value="NM_001183671.1"/>
</dbReference>
<dbReference type="PDB" id="2KKM">
    <property type="method" value="NMR"/>
    <property type="chains" value="A=38-178"/>
</dbReference>
<dbReference type="PDB" id="8HFR">
    <property type="method" value="EM"/>
    <property type="resolution" value="2.64 A"/>
    <property type="chains" value="sm=1-178"/>
</dbReference>
<dbReference type="PDBsum" id="2KKM"/>
<dbReference type="PDBsum" id="8HFR"/>
<dbReference type="BMRB" id="Q08687"/>
<dbReference type="EMDB" id="EMD-34725"/>
<dbReference type="SMR" id="Q08687"/>
<dbReference type="BioGRID" id="34642">
    <property type="interactions" value="103"/>
</dbReference>
<dbReference type="DIP" id="DIP-4112N"/>
<dbReference type="FunCoup" id="Q08687">
    <property type="interactions" value="424"/>
</dbReference>
<dbReference type="IntAct" id="Q08687">
    <property type="interactions" value="55"/>
</dbReference>
<dbReference type="MINT" id="Q08687"/>
<dbReference type="STRING" id="4932.YOR252W"/>
<dbReference type="iPTMnet" id="Q08687"/>
<dbReference type="PaxDb" id="4932-YOR252W"/>
<dbReference type="PeptideAtlas" id="Q08687"/>
<dbReference type="EnsemblFungi" id="YOR252W_mRNA">
    <property type="protein sequence ID" value="YOR252W"/>
    <property type="gene ID" value="YOR252W"/>
</dbReference>
<dbReference type="GeneID" id="854426"/>
<dbReference type="KEGG" id="sce:YOR252W"/>
<dbReference type="AGR" id="SGD:S000005778"/>
<dbReference type="SGD" id="S000005778">
    <property type="gene designation" value="TMA16"/>
</dbReference>
<dbReference type="VEuPathDB" id="FungiDB:YOR252W"/>
<dbReference type="eggNOG" id="ENOG502RY79">
    <property type="taxonomic scope" value="Eukaryota"/>
</dbReference>
<dbReference type="GeneTree" id="ENSGT00390000004179"/>
<dbReference type="HOGENOM" id="CLU_106785_0_0_1"/>
<dbReference type="InParanoid" id="Q08687"/>
<dbReference type="OMA" id="FWMPDLS"/>
<dbReference type="OrthoDB" id="270284at2759"/>
<dbReference type="BioCyc" id="YEAST:G3O-33743-MONOMER"/>
<dbReference type="BioGRID-ORCS" id="854426">
    <property type="hits" value="0 hits in 10 CRISPR screens"/>
</dbReference>
<dbReference type="EvolutionaryTrace" id="Q08687"/>
<dbReference type="PRO" id="PR:Q08687"/>
<dbReference type="Proteomes" id="UP000002311">
    <property type="component" value="Chromosome XV"/>
</dbReference>
<dbReference type="RNAct" id="Q08687">
    <property type="molecule type" value="protein"/>
</dbReference>
<dbReference type="GO" id="GO:0005634">
    <property type="term" value="C:nucleus"/>
    <property type="evidence" value="ECO:0007005"/>
    <property type="project" value="SGD"/>
</dbReference>
<dbReference type="FunFam" id="1.20.1440.170:FF:000002">
    <property type="entry name" value="TMA16p protein"/>
    <property type="match status" value="1"/>
</dbReference>
<dbReference type="Gene3D" id="1.20.1440.170">
    <property type="entry name" value="Translation machinery-associated protein 16-like"/>
    <property type="match status" value="1"/>
</dbReference>
<dbReference type="InterPro" id="IPR021346">
    <property type="entry name" value="Tma16"/>
</dbReference>
<dbReference type="InterPro" id="IPR038356">
    <property type="entry name" value="Tma16_sf"/>
</dbReference>
<dbReference type="PANTHER" id="PTHR13349">
    <property type="entry name" value="TRANSLATION MACHINERY-ASSOCIATED PROTEIN 16"/>
    <property type="match status" value="1"/>
</dbReference>
<dbReference type="PANTHER" id="PTHR13349:SF2">
    <property type="entry name" value="TRANSLATION MACHINERY-ASSOCIATED PROTEIN 16"/>
    <property type="match status" value="1"/>
</dbReference>
<dbReference type="Pfam" id="PF11176">
    <property type="entry name" value="Tma16"/>
    <property type="match status" value="1"/>
</dbReference>
<proteinExistence type="evidence at protein level"/>
<name>TMA16_YEAST</name>
<reference key="1">
    <citation type="journal article" date="1997" name="Yeast">
        <title>Sequencing analysis of a 36.8 kb fragment of yeast chromosome XV reveals 26 open reading frames including SEC63, CDC31, SUG2, GCD1, RBL2, PNT1, PAC1 and VPH1.</title>
        <authorList>
            <person name="Poirey R."/>
            <person name="Jauniaux J.-C."/>
        </authorList>
    </citation>
    <scope>NUCLEOTIDE SEQUENCE [GENOMIC DNA]</scope>
    <source>
        <strain>ATCC 96604 / S288c / FY1679</strain>
    </source>
</reference>
<reference key="2">
    <citation type="journal article" date="1997" name="Nature">
        <title>The nucleotide sequence of Saccharomyces cerevisiae chromosome XV.</title>
        <authorList>
            <person name="Dujon B."/>
            <person name="Albermann K."/>
            <person name="Aldea M."/>
            <person name="Alexandraki D."/>
            <person name="Ansorge W."/>
            <person name="Arino J."/>
            <person name="Benes V."/>
            <person name="Bohn C."/>
            <person name="Bolotin-Fukuhara M."/>
            <person name="Bordonne R."/>
            <person name="Boyer J."/>
            <person name="Camasses A."/>
            <person name="Casamayor A."/>
            <person name="Casas C."/>
            <person name="Cheret G."/>
            <person name="Cziepluch C."/>
            <person name="Daignan-Fornier B."/>
            <person name="Dang V.-D."/>
            <person name="de Haan M."/>
            <person name="Delius H."/>
            <person name="Durand P."/>
            <person name="Fairhead C."/>
            <person name="Feldmann H."/>
            <person name="Gaillon L."/>
            <person name="Galisson F."/>
            <person name="Gamo F.-J."/>
            <person name="Gancedo C."/>
            <person name="Goffeau A."/>
            <person name="Goulding S.E."/>
            <person name="Grivell L.A."/>
            <person name="Habbig B."/>
            <person name="Hand N.J."/>
            <person name="Hani J."/>
            <person name="Hattenhorst U."/>
            <person name="Hebling U."/>
            <person name="Hernando Y."/>
            <person name="Herrero E."/>
            <person name="Heumann K."/>
            <person name="Hiesel R."/>
            <person name="Hilger F."/>
            <person name="Hofmann B."/>
            <person name="Hollenberg C.P."/>
            <person name="Hughes B."/>
            <person name="Jauniaux J.-C."/>
            <person name="Kalogeropoulos A."/>
            <person name="Katsoulou C."/>
            <person name="Kordes E."/>
            <person name="Lafuente M.J."/>
            <person name="Landt O."/>
            <person name="Louis E.J."/>
            <person name="Maarse A.C."/>
            <person name="Madania A."/>
            <person name="Mannhaupt G."/>
            <person name="Marck C."/>
            <person name="Martin R.P."/>
            <person name="Mewes H.-W."/>
            <person name="Michaux G."/>
            <person name="Paces V."/>
            <person name="Parle-McDermott A.G."/>
            <person name="Pearson B.M."/>
            <person name="Perrin A."/>
            <person name="Pettersson B."/>
            <person name="Poch O."/>
            <person name="Pohl T.M."/>
            <person name="Poirey R."/>
            <person name="Portetelle D."/>
            <person name="Pujol A."/>
            <person name="Purnelle B."/>
            <person name="Ramezani Rad M."/>
            <person name="Rechmann S."/>
            <person name="Schwager C."/>
            <person name="Schweizer M."/>
            <person name="Sor F."/>
            <person name="Sterky F."/>
            <person name="Tarassov I.A."/>
            <person name="Teodoru C."/>
            <person name="Tettelin H."/>
            <person name="Thierry A."/>
            <person name="Tobiasch E."/>
            <person name="Tzermia M."/>
            <person name="Uhlen M."/>
            <person name="Unseld M."/>
            <person name="Valens M."/>
            <person name="Vandenbol M."/>
            <person name="Vetter I."/>
            <person name="Vlcek C."/>
            <person name="Voet M."/>
            <person name="Volckaert G."/>
            <person name="Voss H."/>
            <person name="Wambutt R."/>
            <person name="Wedler H."/>
            <person name="Wiemann S."/>
            <person name="Winsor B."/>
            <person name="Wolfe K.H."/>
            <person name="Zollner A."/>
            <person name="Zumstein E."/>
            <person name="Kleine K."/>
        </authorList>
    </citation>
    <scope>NUCLEOTIDE SEQUENCE [LARGE SCALE GENOMIC DNA]</scope>
    <source>
        <strain>ATCC 204508 / S288c</strain>
    </source>
</reference>
<reference key="3">
    <citation type="journal article" date="2014" name="G3 (Bethesda)">
        <title>The reference genome sequence of Saccharomyces cerevisiae: Then and now.</title>
        <authorList>
            <person name="Engel S.R."/>
            <person name="Dietrich F.S."/>
            <person name="Fisk D.G."/>
            <person name="Binkley G."/>
            <person name="Balakrishnan R."/>
            <person name="Costanzo M.C."/>
            <person name="Dwight S.S."/>
            <person name="Hitz B.C."/>
            <person name="Karra K."/>
            <person name="Nash R.S."/>
            <person name="Weng S."/>
            <person name="Wong E.D."/>
            <person name="Lloyd P."/>
            <person name="Skrzypek M.S."/>
            <person name="Miyasato S.R."/>
            <person name="Simison M."/>
            <person name="Cherry J.M."/>
        </authorList>
    </citation>
    <scope>GENOME REANNOTATION</scope>
    <source>
        <strain>ATCC 204508 / S288c</strain>
    </source>
</reference>
<reference key="4">
    <citation type="journal article" date="2003" name="Nature">
        <title>Sequencing and comparison of yeast species to identify genes and regulatory elements.</title>
        <authorList>
            <person name="Kellis M."/>
            <person name="Patterson N."/>
            <person name="Endrizzi M."/>
            <person name="Birren B.W."/>
            <person name="Lander E.S."/>
        </authorList>
    </citation>
    <scope>IDENTIFICATION OF FRAMESHIFT</scope>
</reference>
<reference key="5">
    <citation type="journal article" date="2003" name="Nature">
        <title>Global analysis of protein localization in budding yeast.</title>
        <authorList>
            <person name="Huh W.-K."/>
            <person name="Falvo J.V."/>
            <person name="Gerke L.C."/>
            <person name="Carroll A.S."/>
            <person name="Howson R.W."/>
            <person name="Weissman J.S."/>
            <person name="O'Shea E.K."/>
        </authorList>
    </citation>
    <scope>SUBCELLULAR LOCATION [LARGE SCALE ANALYSIS]</scope>
</reference>
<reference key="6">
    <citation type="journal article" date="2003" name="Nature">
        <title>Global analysis of protein expression in yeast.</title>
        <authorList>
            <person name="Ghaemmaghami S."/>
            <person name="Huh W.-K."/>
            <person name="Bower K."/>
            <person name="Howson R.W."/>
            <person name="Belle A."/>
            <person name="Dephoure N."/>
            <person name="O'Shea E.K."/>
            <person name="Weissman J.S."/>
        </authorList>
    </citation>
    <scope>LEVEL OF PROTEIN EXPRESSION [LARGE SCALE ANALYSIS]</scope>
</reference>
<keyword id="KW-0002">3D-structure</keyword>
<keyword id="KW-0539">Nucleus</keyword>
<keyword id="KW-1185">Reference proteome</keyword>